<sequence>MAKHATPKLDQLESGPWPSFVSDIKQEAAYRAANPKGLDYQVPVDCPEDLLGVLELSYDEGETHWKHGGIVGVFGYGGGVIGRYCDQPEKFPGVAHFHTVRVAQPSGKYYSADYLRQLCDIWDLRGSGLTNMHGSTGDIVLLGTQTPQLEEIFFELTHNLNTDLGGSGSNLRTPESCLGKSRCEFACYDSQAACYELTMEYQDELHRPAFPYKFKFKFDACPNGCVASIARSDFSVIGTWKDDIKIDAEAVKAYVAGEFKPNAGAHSGRDWGKFDIEAEVVNRCPSKCMKWDGSKLSIDNKECVRCMHCINTMPRALHIGDERGASILCGAKAPILDGAQMGSLLVPFVAAEEPFDEIKEVVEKIWDWWMEEGKNRERLGETMKRLSFQKLLEVTEIAPVPQHVKEPRTNPYIFFKEEEVPGGWDRDITEYRKRHLR</sequence>
<protein>
    <recommendedName>
        <fullName>Sulfite reductase, dissimilatory-type subunit alpha</fullName>
    </recommendedName>
    <alternativeName>
        <fullName>Desulfoviridin subunit alpha</fullName>
    </alternativeName>
    <alternativeName>
        <fullName evidence="5">Dissimilatory sulfite reductase subunit alpha</fullName>
        <shortName evidence="5">dSiR alpha</shortName>
    </alternativeName>
    <alternativeName>
        <fullName>Hydrogensulfite reductase subunit alpha</fullName>
    </alternativeName>
</protein>
<keyword id="KW-0002">3D-structure</keyword>
<keyword id="KW-0004">4Fe-4S</keyword>
<keyword id="KW-0903">Direct protein sequencing</keyword>
<keyword id="KW-0408">Iron</keyword>
<keyword id="KW-0411">Iron-sulfur</keyword>
<keyword id="KW-0479">Metal-binding</keyword>
<keyword id="KW-1185">Reference proteome</keyword>
<feature type="initiator methionine" description="Removed" evidence="2">
    <location>
        <position position="1"/>
    </location>
</feature>
<feature type="chain" id="PRO_0000080030" description="Sulfite reductase, dissimilatory-type subunit alpha">
    <location>
        <begin position="2"/>
        <end position="437"/>
    </location>
</feature>
<feature type="domain" description="4Fe-4S ferredoxin-type" evidence="1">
    <location>
        <begin position="294"/>
        <end position="322"/>
    </location>
</feature>
<feature type="binding site" evidence="3 7">
    <location>
        <position position="177"/>
    </location>
    <ligand>
        <name>[4Fe-4S] cluster</name>
        <dbReference type="ChEBI" id="CHEBI:49883"/>
        <label>1</label>
    </ligand>
</feature>
<feature type="binding site" evidence="3 7">
    <location>
        <position position="183"/>
    </location>
    <ligand>
        <name>[4Fe-4S] cluster</name>
        <dbReference type="ChEBI" id="CHEBI:49883"/>
        <label>1</label>
    </ligand>
</feature>
<feature type="binding site" evidence="3 7">
    <location>
        <position position="221"/>
    </location>
    <ligand>
        <name>[4Fe-4S] cluster</name>
        <dbReference type="ChEBI" id="CHEBI:49883"/>
        <label>1</label>
    </ligand>
</feature>
<feature type="binding site" evidence="3 7">
    <location>
        <position position="225"/>
    </location>
    <ligand>
        <name>[4Fe-4S] cluster</name>
        <dbReference type="ChEBI" id="CHEBI:49883"/>
        <label>1</label>
    </ligand>
</feature>
<feature type="binding site" evidence="3 7">
    <location>
        <position position="284"/>
    </location>
    <ligand>
        <name>[4Fe-4S] cluster</name>
        <dbReference type="ChEBI" id="CHEBI:49883"/>
        <label>2</label>
    </ligand>
</feature>
<feature type="binding site" evidence="3 7">
    <location>
        <position position="303"/>
    </location>
    <ligand>
        <name>[4Fe-4S] cluster</name>
        <dbReference type="ChEBI" id="CHEBI:49883"/>
        <label>2</label>
    </ligand>
</feature>
<feature type="binding site" evidence="3 7">
    <location>
        <position position="306"/>
    </location>
    <ligand>
        <name>[4Fe-4S] cluster</name>
        <dbReference type="ChEBI" id="CHEBI:49883"/>
        <label>2</label>
    </ligand>
</feature>
<feature type="binding site" evidence="3 7">
    <location>
        <position position="309"/>
    </location>
    <ligand>
        <name>[4Fe-4S] cluster</name>
        <dbReference type="ChEBI" id="CHEBI:49883"/>
        <label>2</label>
    </ligand>
</feature>
<feature type="sequence conflict" description="In Ref. 3; AA sequence." evidence="6" ref="3">
    <original>S</original>
    <variation>V</variation>
    <location>
        <position position="22"/>
    </location>
</feature>
<feature type="sequence conflict" description="In Ref. 3; AA sequence." evidence="6" ref="3">
    <original>Q</original>
    <variation>K</variation>
    <location>
        <position position="26"/>
    </location>
</feature>
<feature type="helix" evidence="8">
    <location>
        <begin position="9"/>
        <end position="13"/>
    </location>
</feature>
<feature type="strand" evidence="8">
    <location>
        <begin position="14"/>
        <end position="17"/>
    </location>
</feature>
<feature type="helix" evidence="8">
    <location>
        <begin position="20"/>
        <end position="33"/>
    </location>
</feature>
<feature type="helix" evidence="8">
    <location>
        <begin position="46"/>
        <end position="60"/>
    </location>
</feature>
<feature type="strand" evidence="8">
    <location>
        <begin position="79"/>
        <end position="81"/>
    </location>
</feature>
<feature type="strand" evidence="8">
    <location>
        <begin position="84"/>
        <end position="87"/>
    </location>
</feature>
<feature type="turn" evidence="8">
    <location>
        <begin position="88"/>
        <end position="90"/>
    </location>
</feature>
<feature type="helix" evidence="8">
    <location>
        <begin position="92"/>
        <end position="94"/>
    </location>
</feature>
<feature type="strand" evidence="8">
    <location>
        <begin position="99"/>
        <end position="102"/>
    </location>
</feature>
<feature type="strand" evidence="8">
    <location>
        <begin position="109"/>
        <end position="111"/>
    </location>
</feature>
<feature type="helix" evidence="8">
    <location>
        <begin position="112"/>
        <end position="125"/>
    </location>
</feature>
<feature type="strand" evidence="8">
    <location>
        <begin position="128"/>
        <end position="132"/>
    </location>
</feature>
<feature type="strand" evidence="8">
    <location>
        <begin position="139"/>
        <end position="142"/>
    </location>
</feature>
<feature type="helix" evidence="8">
    <location>
        <begin position="146"/>
        <end position="148"/>
    </location>
</feature>
<feature type="helix" evidence="8">
    <location>
        <begin position="149"/>
        <end position="158"/>
    </location>
</feature>
<feature type="strand" evidence="8">
    <location>
        <begin position="168"/>
        <end position="171"/>
    </location>
</feature>
<feature type="helix" evidence="8">
    <location>
        <begin position="179"/>
        <end position="181"/>
    </location>
</feature>
<feature type="helix" evidence="8">
    <location>
        <begin position="190"/>
        <end position="200"/>
    </location>
</feature>
<feature type="helix" evidence="8">
    <location>
        <begin position="202"/>
        <end position="206"/>
    </location>
</feature>
<feature type="strand" evidence="8">
    <location>
        <begin position="210"/>
        <end position="212"/>
    </location>
</feature>
<feature type="strand" evidence="8">
    <location>
        <begin position="216"/>
        <end position="221"/>
    </location>
</feature>
<feature type="helix" evidence="8">
    <location>
        <begin position="228"/>
        <end position="231"/>
    </location>
</feature>
<feature type="strand" evidence="8">
    <location>
        <begin position="233"/>
        <end position="242"/>
    </location>
</feature>
<feature type="helix" evidence="8">
    <location>
        <begin position="248"/>
        <end position="255"/>
    </location>
</feature>
<feature type="helix" evidence="8">
    <location>
        <begin position="261"/>
        <end position="264"/>
    </location>
</feature>
<feature type="turn" evidence="8">
    <location>
        <begin position="265"/>
        <end position="268"/>
    </location>
</feature>
<feature type="helix" evidence="8">
    <location>
        <begin position="276"/>
        <end position="279"/>
    </location>
</feature>
<feature type="helix" evidence="8">
    <location>
        <begin position="281"/>
        <end position="283"/>
    </location>
</feature>
<feature type="strand" evidence="8">
    <location>
        <begin position="289"/>
        <end position="291"/>
    </location>
</feature>
<feature type="strand" evidence="8">
    <location>
        <begin position="296"/>
        <end position="298"/>
    </location>
</feature>
<feature type="helix" evidence="8">
    <location>
        <begin position="300"/>
        <end position="302"/>
    </location>
</feature>
<feature type="helix" evidence="8">
    <location>
        <begin position="308"/>
        <end position="312"/>
    </location>
</feature>
<feature type="turn" evidence="8">
    <location>
        <begin position="314"/>
        <end position="316"/>
    </location>
</feature>
<feature type="strand" evidence="8">
    <location>
        <begin position="321"/>
        <end position="329"/>
    </location>
</feature>
<feature type="turn" evidence="8">
    <location>
        <begin position="335"/>
        <end position="337"/>
    </location>
</feature>
<feature type="strand" evidence="8">
    <location>
        <begin position="343"/>
        <end position="349"/>
    </location>
</feature>
<feature type="helix" evidence="8">
    <location>
        <begin position="356"/>
        <end position="372"/>
    </location>
</feature>
<feature type="helix" evidence="8">
    <location>
        <begin position="379"/>
        <end position="386"/>
    </location>
</feature>
<feature type="helix" evidence="8">
    <location>
        <begin position="388"/>
        <end position="394"/>
    </location>
</feature>
<feature type="helix" evidence="8">
    <location>
        <begin position="401"/>
        <end position="403"/>
    </location>
</feature>
<feature type="strand" evidence="8">
    <location>
        <begin position="404"/>
        <end position="406"/>
    </location>
</feature>
<feature type="helix" evidence="8">
    <location>
        <begin position="417"/>
        <end position="419"/>
    </location>
</feature>
<feature type="helix" evidence="8">
    <location>
        <begin position="428"/>
        <end position="434"/>
    </location>
</feature>
<organism>
    <name type="scientific">Nitratidesulfovibrio vulgaris (strain ATCC 29579 / DSM 644 / CCUG 34227 / NCIMB 8303 / VKM B-1760 / Hildenborough)</name>
    <name type="common">Desulfovibrio vulgaris</name>
    <dbReference type="NCBI Taxonomy" id="882"/>
    <lineage>
        <taxon>Bacteria</taxon>
        <taxon>Pseudomonadati</taxon>
        <taxon>Thermodesulfobacteriota</taxon>
        <taxon>Desulfovibrionia</taxon>
        <taxon>Desulfovibrionales</taxon>
        <taxon>Desulfovibrionaceae</taxon>
        <taxon>Nitratidesulfovibrio</taxon>
    </lineage>
</organism>
<comment type="function">
    <text evidence="2 4">Part of the complex that catalyzes the reduction of sulfite to sulfide. The alpha and beta subunits may have arisen by gene duplication. They both bind 2 iron-sulfur clusters, but the alpha subunit seems to be catalytically inactive, due to substitutions along the putative substrate access channel, and because it binds sirohydrochlorin (the dematallated form of siroheme) instead of siroheme.</text>
</comment>
<comment type="subunit">
    <text evidence="2 3">Heterohexamer of two alpha, two beta and two gamma subunits.</text>
</comment>
<comment type="interaction">
    <interactant intactId="EBI-9016991">
        <id>P45574</id>
    </interactant>
    <interactant intactId="EBI-9016987">
        <id>P45575</id>
        <label>dsvB</label>
    </interactant>
    <organismsDiffer>false</organismsDiffer>
    <experiments>5</experiments>
</comment>
<comment type="interaction">
    <interactant intactId="EBI-9016991">
        <id>P45574</id>
    </interactant>
    <interactant intactId="EBI-9017020">
        <id>P45573</id>
        <label>dsvC</label>
    </interactant>
    <organismsDiffer>false</organismsDiffer>
    <experiments>3</experiments>
</comment>
<dbReference type="EMBL" id="U16723">
    <property type="protein sequence ID" value="AAA70107.1"/>
    <property type="molecule type" value="Genomic_DNA"/>
</dbReference>
<dbReference type="EMBL" id="AE017285">
    <property type="protein sequence ID" value="AAS94885.1"/>
    <property type="molecule type" value="Genomic_DNA"/>
</dbReference>
<dbReference type="PIR" id="S21197">
    <property type="entry name" value="S21197"/>
</dbReference>
<dbReference type="RefSeq" id="WP_010937709.1">
    <property type="nucleotide sequence ID" value="NC_002937.3"/>
</dbReference>
<dbReference type="RefSeq" id="YP_009626.1">
    <property type="nucleotide sequence ID" value="NC_002937.3"/>
</dbReference>
<dbReference type="PDB" id="2V4J">
    <property type="method" value="X-ray"/>
    <property type="resolution" value="2.10 A"/>
    <property type="chains" value="A/D=1-437"/>
</dbReference>
<dbReference type="PDBsum" id="2V4J"/>
<dbReference type="SMR" id="P45574"/>
<dbReference type="IntAct" id="P45574">
    <property type="interactions" value="6"/>
</dbReference>
<dbReference type="STRING" id="882.DVU_0402"/>
<dbReference type="PaxDb" id="882-DVU_0402"/>
<dbReference type="EnsemblBacteria" id="AAS94885">
    <property type="protein sequence ID" value="AAS94885"/>
    <property type="gene ID" value="DVU_0402"/>
</dbReference>
<dbReference type="KEGG" id="dvu:DVU_0402"/>
<dbReference type="PATRIC" id="fig|882.5.peg.379"/>
<dbReference type="eggNOG" id="COG2221">
    <property type="taxonomic scope" value="Bacteria"/>
</dbReference>
<dbReference type="HOGENOM" id="CLU_660112_0_0_7"/>
<dbReference type="OrthoDB" id="9800558at2"/>
<dbReference type="PhylomeDB" id="P45574"/>
<dbReference type="BioCyc" id="MetaCyc:MONOMER-12511"/>
<dbReference type="BRENDA" id="1.8.99.5">
    <property type="organism ID" value="1914"/>
</dbReference>
<dbReference type="EvolutionaryTrace" id="P45574"/>
<dbReference type="Proteomes" id="UP000002194">
    <property type="component" value="Chromosome"/>
</dbReference>
<dbReference type="GO" id="GO:0009337">
    <property type="term" value="C:sulfite reductase complex (NADPH)"/>
    <property type="evidence" value="ECO:0007669"/>
    <property type="project" value="TreeGrafter"/>
</dbReference>
<dbReference type="GO" id="GO:0051539">
    <property type="term" value="F:4 iron, 4 sulfur cluster binding"/>
    <property type="evidence" value="ECO:0007669"/>
    <property type="project" value="UniProtKB-KW"/>
</dbReference>
<dbReference type="GO" id="GO:0018551">
    <property type="term" value="F:dissimilatory sulfite reductase (NADH) activity"/>
    <property type="evidence" value="ECO:0007669"/>
    <property type="project" value="InterPro"/>
</dbReference>
<dbReference type="GO" id="GO:0020037">
    <property type="term" value="F:heme binding"/>
    <property type="evidence" value="ECO:0007669"/>
    <property type="project" value="InterPro"/>
</dbReference>
<dbReference type="GO" id="GO:0046872">
    <property type="term" value="F:metal ion binding"/>
    <property type="evidence" value="ECO:0007669"/>
    <property type="project" value="UniProtKB-KW"/>
</dbReference>
<dbReference type="GO" id="GO:0050311">
    <property type="term" value="F:sulfite reductase (ferredoxin) activity"/>
    <property type="evidence" value="ECO:0007669"/>
    <property type="project" value="TreeGrafter"/>
</dbReference>
<dbReference type="GO" id="GO:0016002">
    <property type="term" value="F:sulfite reductase activity"/>
    <property type="evidence" value="ECO:0007669"/>
    <property type="project" value="TreeGrafter"/>
</dbReference>
<dbReference type="GO" id="GO:0000103">
    <property type="term" value="P:sulfate assimilation"/>
    <property type="evidence" value="ECO:0007669"/>
    <property type="project" value="TreeGrafter"/>
</dbReference>
<dbReference type="Gene3D" id="3.30.70.20">
    <property type="match status" value="1"/>
</dbReference>
<dbReference type="Gene3D" id="3.30.70.2500">
    <property type="match status" value="1"/>
</dbReference>
<dbReference type="Gene3D" id="6.10.140.1420">
    <property type="match status" value="1"/>
</dbReference>
<dbReference type="Gene3D" id="3.30.413.10">
    <property type="entry name" value="Sulfite Reductase Hemoprotein, domain 1"/>
    <property type="match status" value="1"/>
</dbReference>
<dbReference type="InterPro" id="IPR017896">
    <property type="entry name" value="4Fe4S_Fe-S-bd"/>
</dbReference>
<dbReference type="InterPro" id="IPR011806">
    <property type="entry name" value="DsrA"/>
</dbReference>
<dbReference type="InterPro" id="IPR036136">
    <property type="entry name" value="Nit/Sulf_reduc_fer-like_dom_sf"/>
</dbReference>
<dbReference type="InterPro" id="IPR006067">
    <property type="entry name" value="NO2/SO3_Rdtase_4Fe4S_dom"/>
</dbReference>
<dbReference type="InterPro" id="IPR045169">
    <property type="entry name" value="NO2/SO3_Rdtase_4Fe4S_prot"/>
</dbReference>
<dbReference type="InterPro" id="IPR045854">
    <property type="entry name" value="NO2/SO3_Rdtase_4Fe4S_sf"/>
</dbReference>
<dbReference type="NCBIfam" id="TIGR02064">
    <property type="entry name" value="dsrA"/>
    <property type="match status" value="1"/>
</dbReference>
<dbReference type="PANTHER" id="PTHR11493:SF54">
    <property type="entry name" value="ANAEROBIC SULFITE REDUCTASE SUBUNIT C"/>
    <property type="match status" value="1"/>
</dbReference>
<dbReference type="PANTHER" id="PTHR11493">
    <property type="entry name" value="SULFITE REDUCTASE [NADPH] SUBUNIT BETA-RELATED"/>
    <property type="match status" value="1"/>
</dbReference>
<dbReference type="Pfam" id="PF01077">
    <property type="entry name" value="NIR_SIR"/>
    <property type="match status" value="1"/>
</dbReference>
<dbReference type="SUPFAM" id="SSF54862">
    <property type="entry name" value="4Fe-4S ferredoxins"/>
    <property type="match status" value="1"/>
</dbReference>
<dbReference type="SUPFAM" id="SSF56014">
    <property type="entry name" value="Nitrite and sulphite reductase 4Fe-4S domain-like"/>
    <property type="match status" value="1"/>
</dbReference>
<dbReference type="SUPFAM" id="SSF55124">
    <property type="entry name" value="Nitrite/Sulfite reductase N-terminal domain-like"/>
    <property type="match status" value="1"/>
</dbReference>
<dbReference type="PROSITE" id="PS51379">
    <property type="entry name" value="4FE4S_FER_2"/>
    <property type="match status" value="1"/>
</dbReference>
<reference key="1">
    <citation type="journal article" date="1995" name="Appl. Environ. Microbiol.">
        <title>Conservation of the genes for dissimilatory sulfite reductase from Desulfovibrio vulgaris and Archaeoglobus fulgidus allows their detection by PCR.</title>
        <authorList>
            <person name="Karkhoff-Schweizer R.R."/>
            <person name="Huber D.P.W."/>
            <person name="Voordouw G."/>
        </authorList>
    </citation>
    <scope>NUCLEOTIDE SEQUENCE [GENOMIC DNA]</scope>
</reference>
<reference key="2">
    <citation type="journal article" date="2004" name="Nat. Biotechnol.">
        <title>The genome sequence of the anaerobic, sulfate-reducing bacterium Desulfovibrio vulgaris Hildenborough.</title>
        <authorList>
            <person name="Heidelberg J.F."/>
            <person name="Seshadri R."/>
            <person name="Haveman S.A."/>
            <person name="Hemme C.L."/>
            <person name="Paulsen I.T."/>
            <person name="Kolonay J.F."/>
            <person name="Eisen J.A."/>
            <person name="Ward N.L."/>
            <person name="Methe B.A."/>
            <person name="Brinkac L.M."/>
            <person name="Daugherty S.C."/>
            <person name="DeBoy R.T."/>
            <person name="Dodson R.J."/>
            <person name="Durkin A.S."/>
            <person name="Madupu R."/>
            <person name="Nelson W.C."/>
            <person name="Sullivan S.A."/>
            <person name="Fouts D.E."/>
            <person name="Haft D.H."/>
            <person name="Selengut J."/>
            <person name="Peterson J.D."/>
            <person name="Davidsen T.M."/>
            <person name="Zafar N."/>
            <person name="Zhou L."/>
            <person name="Radune D."/>
            <person name="Dimitrov G."/>
            <person name="Hance M."/>
            <person name="Tran K."/>
            <person name="Khouri H.M."/>
            <person name="Gill J."/>
            <person name="Utterback T.R."/>
            <person name="Feldblyum T.V."/>
            <person name="Wall J.D."/>
            <person name="Voordouw G."/>
            <person name="Fraser C.M."/>
        </authorList>
    </citation>
    <scope>NUCLEOTIDE SEQUENCE [LARGE SCALE GENOMIC DNA]</scope>
    <source>
        <strain>ATCC 29579 / DSM 644 / CCUG 34227 / NCIMB 8303 / VKM B-1760 / Hildenborough</strain>
    </source>
</reference>
<reference key="3">
    <citation type="journal article" date="1992" name="Eur. J. Biochem.">
        <title>The third subunit of desulfoviridin-type dissimilatory sulfite reductases.</title>
        <authorList>
            <person name="Pierik A.J."/>
            <person name="Duyvis M.G."/>
            <person name="van Helvoort J.M.L.M."/>
            <person name="Wolbert R.B.G."/>
            <person name="Hagen W.R."/>
        </authorList>
    </citation>
    <scope>PROTEIN SEQUENCE OF 2-26</scope>
    <scope>SUBUNIT</scope>
</reference>
<reference key="4">
    <citation type="journal article" date="1973" name="J. Bacteriol.">
        <title>Isolation of assimilatory- and dissimilatory-type sulfite reductases from Desulfovibrio vulgaris.</title>
        <authorList>
            <person name="Lee J.-P."/>
            <person name="LeGall J."/>
            <person name="Peck H.D. Jr."/>
        </authorList>
    </citation>
    <scope>CHARACTERIZATION</scope>
</reference>
<reference key="5">
    <citation type="journal article" date="1994" name="Eur. J. Biochem.">
        <title>Desulfoviridin, a multimeric-dissimilatory sulfite reductase from Desulfovibrio vulgaris (Hildenborough). Purification, characterization, kinetics and EPR studies.</title>
        <authorList>
            <person name="Wolfe B.M."/>
            <person name="Lui S.M."/>
            <person name="Cowan J.A."/>
        </authorList>
    </citation>
    <scope>FUNCTION</scope>
    <scope>EPR SPECTROSCOPY</scope>
</reference>
<reference key="6">
    <citation type="journal article" date="2008" name="J. Biol. Chem.">
        <title>The crystal structure of Desulfovibrio vulgaris dissimilatory sulfite reductase bound to DsrC provides novel insights into the mechanism of sulfate respiration.</title>
        <authorList>
            <person name="Oliveira T.F."/>
            <person name="Vonrhein C."/>
            <person name="Matias P.M."/>
            <person name="Venceslau S.S."/>
            <person name="Pereira I.A.C."/>
            <person name="Archer M."/>
        </authorList>
    </citation>
    <scope>X-RAY CRYSTALLOGRAPHY (2.10 ANGSTROMS) IN COMPLEX WITH DSVB; DSVC; SIROHYDROCHLORIN AND IRON-SULFUR (4FE-4S)</scope>
    <scope>SUBUNIT</scope>
</reference>
<gene>
    <name type="primary">dsvA</name>
    <name evidence="5" type="synonym">dsrA</name>
    <name type="ordered locus">DVU_0402</name>
</gene>
<proteinExistence type="evidence at protein level"/>
<accession>P45574</accession>
<accession>Q46581</accession>
<name>DSVA_NITV2</name>
<evidence type="ECO:0000255" key="1">
    <source>
        <dbReference type="PROSITE-ProRule" id="PRU00711"/>
    </source>
</evidence>
<evidence type="ECO:0000269" key="2">
    <source>
    </source>
</evidence>
<evidence type="ECO:0000269" key="3">
    <source>
    </source>
</evidence>
<evidence type="ECO:0000269" key="4">
    <source>
    </source>
</evidence>
<evidence type="ECO:0000303" key="5">
    <source>
    </source>
</evidence>
<evidence type="ECO:0000305" key="6"/>
<evidence type="ECO:0007744" key="7">
    <source>
        <dbReference type="PDB" id="2V4J"/>
    </source>
</evidence>
<evidence type="ECO:0007829" key="8">
    <source>
        <dbReference type="PDB" id="2V4J"/>
    </source>
</evidence>